<feature type="chain" id="PRO_0000189186" description="4-diphosphocytidyl-2-C-methyl-D-erythritol kinase">
    <location>
        <begin position="1"/>
        <end position="289"/>
    </location>
</feature>
<feature type="active site" evidence="1">
    <location>
        <position position="10"/>
    </location>
</feature>
<feature type="active site" evidence="1">
    <location>
        <position position="136"/>
    </location>
</feature>
<feature type="binding site" evidence="1">
    <location>
        <begin position="94"/>
        <end position="104"/>
    </location>
    <ligand>
        <name>ATP</name>
        <dbReference type="ChEBI" id="CHEBI:30616"/>
    </ligand>
</feature>
<reference key="1">
    <citation type="journal article" date="2003" name="Nature">
        <title>Genome sequence of Bacillus cereus and comparative analysis with Bacillus anthracis.</title>
        <authorList>
            <person name="Ivanova N."/>
            <person name="Sorokin A."/>
            <person name="Anderson I."/>
            <person name="Galleron N."/>
            <person name="Candelon B."/>
            <person name="Kapatral V."/>
            <person name="Bhattacharyya A."/>
            <person name="Reznik G."/>
            <person name="Mikhailova N."/>
            <person name="Lapidus A."/>
            <person name="Chu L."/>
            <person name="Mazur M."/>
            <person name="Goltsman E."/>
            <person name="Larsen N."/>
            <person name="D'Souza M."/>
            <person name="Walunas T."/>
            <person name="Grechkin Y."/>
            <person name="Pusch G."/>
            <person name="Haselkorn R."/>
            <person name="Fonstein M."/>
            <person name="Ehrlich S.D."/>
            <person name="Overbeek R."/>
            <person name="Kyrpides N.C."/>
        </authorList>
    </citation>
    <scope>NUCLEOTIDE SEQUENCE [LARGE SCALE GENOMIC DNA]</scope>
    <source>
        <strain>ATCC 14579 / DSM 31 / CCUG 7414 / JCM 2152 / NBRC 15305 / NCIMB 9373 / NCTC 2599 / NRRL B-3711</strain>
    </source>
</reference>
<gene>
    <name evidence="1" type="primary">ispE</name>
    <name type="ordered locus">BC_0050</name>
</gene>
<organism>
    <name type="scientific">Bacillus cereus (strain ATCC 14579 / DSM 31 / CCUG 7414 / JCM 2152 / NBRC 15305 / NCIMB 9373 / NCTC 2599 / NRRL B-3711)</name>
    <dbReference type="NCBI Taxonomy" id="226900"/>
    <lineage>
        <taxon>Bacteria</taxon>
        <taxon>Bacillati</taxon>
        <taxon>Bacillota</taxon>
        <taxon>Bacilli</taxon>
        <taxon>Bacillales</taxon>
        <taxon>Bacillaceae</taxon>
        <taxon>Bacillus</taxon>
        <taxon>Bacillus cereus group</taxon>
    </lineage>
</organism>
<sequence length="289" mass="31581">MKLLVKAPAKINLSLDVLGKRQDGYHEVKMIMTTIDLADRLELTELAEDRIEILSHNRYVPDDQRNLAYQAAKLLKEKFNVKKGVSITIEKTIPVAAGLAGGSSDAAATLRGLNKLWNLGLTIDELAELGAEIGSDVSFCVYGGTAIATGRGEKIEHIKTPPSCWVILAKPHIGVSTADVYGNLKLNRVTHPNVDKMVDVINSGDYKGICDTVGNVLEDVTFGMHPEVARIKSQMKRFGADAVLMSGSGPTVFGLVHHDSRMHRIYNGLKGFCEQVYAVRLLGERETLE</sequence>
<protein>
    <recommendedName>
        <fullName evidence="1">4-diphosphocytidyl-2-C-methyl-D-erythritol kinase</fullName>
        <shortName evidence="1">CMK</shortName>
        <ecNumber evidence="1">2.7.1.148</ecNumber>
    </recommendedName>
    <alternativeName>
        <fullName evidence="1">4-(cytidine-5'-diphospho)-2-C-methyl-D-erythritol kinase</fullName>
    </alternativeName>
</protein>
<evidence type="ECO:0000255" key="1">
    <source>
        <dbReference type="HAMAP-Rule" id="MF_00061"/>
    </source>
</evidence>
<proteinExistence type="inferred from homology"/>
<name>ISPE_BACCR</name>
<comment type="function">
    <text evidence="1">Catalyzes the phosphorylation of the position 2 hydroxy group of 4-diphosphocytidyl-2C-methyl-D-erythritol.</text>
</comment>
<comment type="catalytic activity">
    <reaction evidence="1">
        <text>4-CDP-2-C-methyl-D-erythritol + ATP = 4-CDP-2-C-methyl-D-erythritol 2-phosphate + ADP + H(+)</text>
        <dbReference type="Rhea" id="RHEA:18437"/>
        <dbReference type="ChEBI" id="CHEBI:15378"/>
        <dbReference type="ChEBI" id="CHEBI:30616"/>
        <dbReference type="ChEBI" id="CHEBI:57823"/>
        <dbReference type="ChEBI" id="CHEBI:57919"/>
        <dbReference type="ChEBI" id="CHEBI:456216"/>
        <dbReference type="EC" id="2.7.1.148"/>
    </reaction>
</comment>
<comment type="pathway">
    <text evidence="1">Isoprenoid biosynthesis; isopentenyl diphosphate biosynthesis via DXP pathway; isopentenyl diphosphate from 1-deoxy-D-xylulose 5-phosphate: step 3/6.</text>
</comment>
<comment type="similarity">
    <text evidence="1">Belongs to the GHMP kinase family. IspE subfamily.</text>
</comment>
<keyword id="KW-0067">ATP-binding</keyword>
<keyword id="KW-0414">Isoprene biosynthesis</keyword>
<keyword id="KW-0418">Kinase</keyword>
<keyword id="KW-0547">Nucleotide-binding</keyword>
<keyword id="KW-1185">Reference proteome</keyword>
<keyword id="KW-0808">Transferase</keyword>
<dbReference type="EC" id="2.7.1.148" evidence="1"/>
<dbReference type="EMBL" id="AE016877">
    <property type="protein sequence ID" value="AAP07148.1"/>
    <property type="molecule type" value="Genomic_DNA"/>
</dbReference>
<dbReference type="RefSeq" id="NP_829947.1">
    <property type="nucleotide sequence ID" value="NC_004722.1"/>
</dbReference>
<dbReference type="RefSeq" id="WP_000772104.1">
    <property type="nucleotide sequence ID" value="NZ_CP138336.1"/>
</dbReference>
<dbReference type="SMR" id="Q81JA2"/>
<dbReference type="STRING" id="226900.BC_0050"/>
<dbReference type="GeneID" id="72446846"/>
<dbReference type="KEGG" id="bce:BC0050"/>
<dbReference type="PATRIC" id="fig|226900.8.peg.67"/>
<dbReference type="HOGENOM" id="CLU_053057_1_1_9"/>
<dbReference type="OrthoDB" id="9809438at2"/>
<dbReference type="UniPathway" id="UPA00056">
    <property type="reaction ID" value="UER00094"/>
</dbReference>
<dbReference type="Proteomes" id="UP000001417">
    <property type="component" value="Chromosome"/>
</dbReference>
<dbReference type="GO" id="GO:0050515">
    <property type="term" value="F:4-(cytidine 5'-diphospho)-2-C-methyl-D-erythritol kinase activity"/>
    <property type="evidence" value="ECO:0000318"/>
    <property type="project" value="GO_Central"/>
</dbReference>
<dbReference type="GO" id="GO:0005524">
    <property type="term" value="F:ATP binding"/>
    <property type="evidence" value="ECO:0007669"/>
    <property type="project" value="UniProtKB-UniRule"/>
</dbReference>
<dbReference type="GO" id="GO:0019288">
    <property type="term" value="P:isopentenyl diphosphate biosynthetic process, methylerythritol 4-phosphate pathway"/>
    <property type="evidence" value="ECO:0007669"/>
    <property type="project" value="UniProtKB-UniRule"/>
</dbReference>
<dbReference type="GO" id="GO:0016114">
    <property type="term" value="P:terpenoid biosynthetic process"/>
    <property type="evidence" value="ECO:0007669"/>
    <property type="project" value="InterPro"/>
</dbReference>
<dbReference type="FunFam" id="3.30.230.10:FF:000029">
    <property type="entry name" value="4-diphosphocytidyl-2-C-methyl-D-erythritol kinase"/>
    <property type="match status" value="1"/>
</dbReference>
<dbReference type="FunFam" id="3.30.70.890:FF:000006">
    <property type="entry name" value="4-diphosphocytidyl-2-C-methyl-D-erythritol kinase"/>
    <property type="match status" value="1"/>
</dbReference>
<dbReference type="Gene3D" id="3.30.230.10">
    <property type="match status" value="1"/>
</dbReference>
<dbReference type="Gene3D" id="3.30.70.890">
    <property type="entry name" value="GHMP kinase, C-terminal domain"/>
    <property type="match status" value="1"/>
</dbReference>
<dbReference type="HAMAP" id="MF_00061">
    <property type="entry name" value="IspE"/>
    <property type="match status" value="1"/>
</dbReference>
<dbReference type="InterPro" id="IPR013750">
    <property type="entry name" value="GHMP_kinase_C_dom"/>
</dbReference>
<dbReference type="InterPro" id="IPR036554">
    <property type="entry name" value="GHMP_kinase_C_sf"/>
</dbReference>
<dbReference type="InterPro" id="IPR006204">
    <property type="entry name" value="GHMP_kinase_N_dom"/>
</dbReference>
<dbReference type="InterPro" id="IPR004424">
    <property type="entry name" value="IspE"/>
</dbReference>
<dbReference type="InterPro" id="IPR020568">
    <property type="entry name" value="Ribosomal_Su5_D2-typ_SF"/>
</dbReference>
<dbReference type="InterPro" id="IPR014721">
    <property type="entry name" value="Ribsml_uS5_D2-typ_fold_subgr"/>
</dbReference>
<dbReference type="NCBIfam" id="TIGR00154">
    <property type="entry name" value="ispE"/>
    <property type="match status" value="1"/>
</dbReference>
<dbReference type="NCBIfam" id="NF011202">
    <property type="entry name" value="PRK14608.1"/>
    <property type="match status" value="1"/>
</dbReference>
<dbReference type="PANTHER" id="PTHR43527">
    <property type="entry name" value="4-DIPHOSPHOCYTIDYL-2-C-METHYL-D-ERYTHRITOL KINASE, CHLOROPLASTIC"/>
    <property type="match status" value="1"/>
</dbReference>
<dbReference type="PANTHER" id="PTHR43527:SF2">
    <property type="entry name" value="4-DIPHOSPHOCYTIDYL-2-C-METHYL-D-ERYTHRITOL KINASE, CHLOROPLASTIC"/>
    <property type="match status" value="1"/>
</dbReference>
<dbReference type="Pfam" id="PF08544">
    <property type="entry name" value="GHMP_kinases_C"/>
    <property type="match status" value="1"/>
</dbReference>
<dbReference type="Pfam" id="PF00288">
    <property type="entry name" value="GHMP_kinases_N"/>
    <property type="match status" value="1"/>
</dbReference>
<dbReference type="PIRSF" id="PIRSF010376">
    <property type="entry name" value="IspE"/>
    <property type="match status" value="1"/>
</dbReference>
<dbReference type="SUPFAM" id="SSF55060">
    <property type="entry name" value="GHMP Kinase, C-terminal domain"/>
    <property type="match status" value="1"/>
</dbReference>
<dbReference type="SUPFAM" id="SSF54211">
    <property type="entry name" value="Ribosomal protein S5 domain 2-like"/>
    <property type="match status" value="1"/>
</dbReference>
<accession>Q81JA2</accession>